<protein>
    <recommendedName>
        <fullName>Ankyrin repeat, SAM and basic leucine zipper domain-containing protein 1</fullName>
    </recommendedName>
    <alternativeName>
        <fullName>Germ cell-specific ankyrin, SAM and basic leucine zipper domain-containing protein</fullName>
    </alternativeName>
</protein>
<keyword id="KW-0040">ANK repeat</keyword>
<keyword id="KW-0963">Cytoplasm</keyword>
<keyword id="KW-0217">Developmental protein</keyword>
<keyword id="KW-0221">Differentiation</keyword>
<keyword id="KW-0469">Meiosis</keyword>
<keyword id="KW-0597">Phosphoprotein</keyword>
<keyword id="KW-0677">Repeat</keyword>
<keyword id="KW-0943">RNA-mediated gene silencing</keyword>
<keyword id="KW-0744">Spermatogenesis</keyword>
<reference key="1">
    <citation type="submission" date="2006-01" db="EMBL/GenBank/DDBJ databases">
        <title>NISC comparative sequencing initiative.</title>
        <authorList>
            <person name="Antonellis A."/>
            <person name="Ayele K."/>
            <person name="Benjamin B."/>
            <person name="Blakesley R.W."/>
            <person name="Boakye A."/>
            <person name="Bouffard G.G."/>
            <person name="Brinkley C."/>
            <person name="Brooks S."/>
            <person name="Chu G."/>
            <person name="Coleman H."/>
            <person name="Engle J."/>
            <person name="Gestole M."/>
            <person name="Greene A."/>
            <person name="Guan X."/>
            <person name="Gupta J."/>
            <person name="Haghighi P."/>
            <person name="Han J."/>
            <person name="Hansen N."/>
            <person name="Ho S.-L."/>
            <person name="Hu P."/>
            <person name="Hunter G."/>
            <person name="Hurle B."/>
            <person name="Idol J.R."/>
            <person name="Kwong P."/>
            <person name="Laric P."/>
            <person name="Larson S."/>
            <person name="Lee-Lin S.-Q."/>
            <person name="Legaspi R."/>
            <person name="Madden M."/>
            <person name="Maduro Q.L."/>
            <person name="Maduro V.B."/>
            <person name="Margulies E.H."/>
            <person name="Masiello C."/>
            <person name="Maskeri B."/>
            <person name="McDowell J."/>
            <person name="Mojidi H.A."/>
            <person name="Mullikin J.C."/>
            <person name="Oestreicher J.S."/>
            <person name="Park M."/>
            <person name="Portnoy M.E."/>
            <person name="Prasad A."/>
            <person name="Puri O."/>
            <person name="Reddix-Dugue N."/>
            <person name="Schandler K."/>
            <person name="Schueler M.G."/>
            <person name="Sison C."/>
            <person name="Stantripop S."/>
            <person name="Stephen E."/>
            <person name="Taye A."/>
            <person name="Thomas J.W."/>
            <person name="Thomas P.J."/>
            <person name="Tsipouri V."/>
            <person name="Ung L."/>
            <person name="Vogt J.L."/>
            <person name="Wetherby K.D."/>
            <person name="Young A."/>
            <person name="Green E.D."/>
        </authorList>
    </citation>
    <scope>NUCLEOTIDE SEQUENCE [LARGE SCALE GENOMIC DNA]</scope>
</reference>
<name>ASZ1_CHLAE</name>
<accession>Q2IBB1</accession>
<sequence>MAAGALRGLPVAGGGESSESEDDGWEIGYLDRTSQKLKGLLPIEEKKEKFKKAMTIGDVSLVQELLDSGISVDSTFQYGWTPLMYAASVANAELVRVLLDRGANASFEKDKQTILITACSAHGSEEQILKCVELLLSRNADPNVACRRLMTPIMYAARDGHTQVVALLVAHGAEVNTQDENGYTALTWAARQGHKNIVLKLLELGANKMLQTKDGKMPSEIAKRNKHHEIFNLLSFTLNPLEGKLQQLTKEDTICKILTTDSDREKDHIFSSYTAFGDLEVFLHGIGLEHMTDLLKERDITLRHLLTMREDEFTKNGITSKDQQKILAALKELQVEEIQFGELSEEIKLEISGDEFLNFLLKLNKQCGHLITAVQNIITELPVNSQKITLEWASPRNFTSVCEELVNNVEDLSEEVCKLKDLIQKLQNERENDPTHIQLREEVSTWNSRILKRTAITVCGFGFLLFICKLTFQRK</sequence>
<proteinExistence type="inferred from homology"/>
<feature type="chain" id="PRO_0000250478" description="Ankyrin repeat, SAM and basic leucine zipper domain-containing protein 1">
    <location>
        <begin position="1"/>
        <end position="475"/>
    </location>
</feature>
<feature type="repeat" description="ANK 1">
    <location>
        <begin position="45"/>
        <end position="74"/>
    </location>
</feature>
<feature type="repeat" description="ANK 2">
    <location>
        <begin position="78"/>
        <end position="107"/>
    </location>
</feature>
<feature type="repeat" description="ANK 3">
    <location>
        <begin position="110"/>
        <end position="144"/>
    </location>
</feature>
<feature type="repeat" description="ANK 4">
    <location>
        <begin position="148"/>
        <end position="177"/>
    </location>
</feature>
<feature type="repeat" description="ANK 5">
    <location>
        <begin position="181"/>
        <end position="210"/>
    </location>
</feature>
<feature type="repeat" description="ANK 6">
    <location>
        <begin position="214"/>
        <end position="243"/>
    </location>
</feature>
<feature type="domain" description="SAM">
    <location>
        <begin position="272"/>
        <end position="334"/>
    </location>
</feature>
<feature type="region of interest" description="Disordered" evidence="3">
    <location>
        <begin position="1"/>
        <end position="25"/>
    </location>
</feature>
<feature type="modified residue" description="Phosphoserine" evidence="2">
    <location>
        <position position="17"/>
    </location>
</feature>
<feature type="modified residue" description="Phosphoserine" evidence="2">
    <location>
        <position position="18"/>
    </location>
</feature>
<feature type="modified residue" description="Phosphoserine" evidence="2">
    <location>
        <position position="20"/>
    </location>
</feature>
<evidence type="ECO:0000250" key="1"/>
<evidence type="ECO:0000250" key="2">
    <source>
        <dbReference type="UniProtKB" id="Q8VD46"/>
    </source>
</evidence>
<evidence type="ECO:0000256" key="3">
    <source>
        <dbReference type="SAM" id="MobiDB-lite"/>
    </source>
</evidence>
<organism>
    <name type="scientific">Chlorocebus aethiops</name>
    <name type="common">Green monkey</name>
    <name type="synonym">Cercopithecus aethiops</name>
    <dbReference type="NCBI Taxonomy" id="9534"/>
    <lineage>
        <taxon>Eukaryota</taxon>
        <taxon>Metazoa</taxon>
        <taxon>Chordata</taxon>
        <taxon>Craniata</taxon>
        <taxon>Vertebrata</taxon>
        <taxon>Euteleostomi</taxon>
        <taxon>Mammalia</taxon>
        <taxon>Eutheria</taxon>
        <taxon>Euarchontoglires</taxon>
        <taxon>Primates</taxon>
        <taxon>Haplorrhini</taxon>
        <taxon>Catarrhini</taxon>
        <taxon>Cercopithecidae</taxon>
        <taxon>Cercopithecinae</taxon>
        <taxon>Chlorocebus</taxon>
    </lineage>
</organism>
<dbReference type="EMBL" id="DP000029">
    <property type="protein sequence ID" value="ABC87490.1"/>
    <property type="molecule type" value="Genomic_DNA"/>
</dbReference>
<dbReference type="SMR" id="Q2IBB1"/>
<dbReference type="GO" id="GO:0071546">
    <property type="term" value="C:pi-body"/>
    <property type="evidence" value="ECO:0000250"/>
    <property type="project" value="UniProtKB"/>
</dbReference>
<dbReference type="GO" id="GO:0030154">
    <property type="term" value="P:cell differentiation"/>
    <property type="evidence" value="ECO:0007669"/>
    <property type="project" value="UniProtKB-KW"/>
</dbReference>
<dbReference type="GO" id="GO:0007140">
    <property type="term" value="P:male meiotic nuclear division"/>
    <property type="evidence" value="ECO:0000250"/>
    <property type="project" value="UniProtKB"/>
</dbReference>
<dbReference type="GO" id="GO:0031047">
    <property type="term" value="P:regulatory ncRNA-mediated gene silencing"/>
    <property type="evidence" value="ECO:0007669"/>
    <property type="project" value="UniProtKB-KW"/>
</dbReference>
<dbReference type="GO" id="GO:0007283">
    <property type="term" value="P:spermatogenesis"/>
    <property type="evidence" value="ECO:0000250"/>
    <property type="project" value="UniProtKB"/>
</dbReference>
<dbReference type="GO" id="GO:0010526">
    <property type="term" value="P:transposable element silencing"/>
    <property type="evidence" value="ECO:0000250"/>
    <property type="project" value="UniProtKB"/>
</dbReference>
<dbReference type="CDD" id="cd09521">
    <property type="entry name" value="SAM_ASZ1"/>
    <property type="match status" value="1"/>
</dbReference>
<dbReference type="FunFam" id="1.25.40.20:FF:000192">
    <property type="entry name" value="Ankyrin repeat, SAM and basic leucine zipper domain-containing 1"/>
    <property type="match status" value="1"/>
</dbReference>
<dbReference type="FunFam" id="1.10.150.50:FF:000060">
    <property type="entry name" value="Ankyrin repeat, SAM and basic leucine zipper domain-containing protein 1"/>
    <property type="match status" value="1"/>
</dbReference>
<dbReference type="Gene3D" id="1.25.40.20">
    <property type="entry name" value="Ankyrin repeat-containing domain"/>
    <property type="match status" value="1"/>
</dbReference>
<dbReference type="Gene3D" id="1.10.150.50">
    <property type="entry name" value="Transcription Factor, Ets-1"/>
    <property type="match status" value="1"/>
</dbReference>
<dbReference type="InterPro" id="IPR002110">
    <property type="entry name" value="Ankyrin_rpt"/>
</dbReference>
<dbReference type="InterPro" id="IPR036770">
    <property type="entry name" value="Ankyrin_rpt-contain_sf"/>
</dbReference>
<dbReference type="InterPro" id="IPR042650">
    <property type="entry name" value="Asz1_SAM"/>
</dbReference>
<dbReference type="InterPro" id="IPR001660">
    <property type="entry name" value="SAM"/>
</dbReference>
<dbReference type="InterPro" id="IPR013761">
    <property type="entry name" value="SAM/pointed_sf"/>
</dbReference>
<dbReference type="PANTHER" id="PTHR24157">
    <property type="entry name" value="ANKYRIN REPEAT, SAM AND BASIC LEUCINE ZIPPER DOMAIN-CONTAINING PROTEIN 1"/>
    <property type="match status" value="1"/>
</dbReference>
<dbReference type="PANTHER" id="PTHR24157:SF3">
    <property type="entry name" value="ANKYRIN REPEAT, SAM AND BASIC LEUCINE ZIPPER DOMAIN-CONTAINING PROTEIN 1"/>
    <property type="match status" value="1"/>
</dbReference>
<dbReference type="Pfam" id="PF00023">
    <property type="entry name" value="Ank"/>
    <property type="match status" value="1"/>
</dbReference>
<dbReference type="Pfam" id="PF12796">
    <property type="entry name" value="Ank_2"/>
    <property type="match status" value="1"/>
</dbReference>
<dbReference type="Pfam" id="PF07647">
    <property type="entry name" value="SAM_2"/>
    <property type="match status" value="1"/>
</dbReference>
<dbReference type="PRINTS" id="PR01415">
    <property type="entry name" value="ANKYRIN"/>
</dbReference>
<dbReference type="SMART" id="SM00248">
    <property type="entry name" value="ANK"/>
    <property type="match status" value="5"/>
</dbReference>
<dbReference type="SUPFAM" id="SSF48403">
    <property type="entry name" value="Ankyrin repeat"/>
    <property type="match status" value="1"/>
</dbReference>
<dbReference type="SUPFAM" id="SSF140860">
    <property type="entry name" value="Pseudo ankyrin repeat-like"/>
    <property type="match status" value="1"/>
</dbReference>
<dbReference type="SUPFAM" id="SSF47769">
    <property type="entry name" value="SAM/Pointed domain"/>
    <property type="match status" value="1"/>
</dbReference>
<dbReference type="PROSITE" id="PS50297">
    <property type="entry name" value="ANK_REP_REGION"/>
    <property type="match status" value="1"/>
</dbReference>
<dbReference type="PROSITE" id="PS50088">
    <property type="entry name" value="ANK_REPEAT"/>
    <property type="match status" value="3"/>
</dbReference>
<comment type="function">
    <text evidence="1">Plays a central role during spermatogenesis by repressing transposable elements and preventing their mobilization, which is essential for the germline integrity. Acts via the piRNA metabolic process, which mediates the repression of transposable elements during meiosis by forming complexes composed of piRNAs and Piwi proteins and governs the methylation and subsequent repression of transposons. Its association with pi-bodies suggests a participation in the primary piRNAs metabolic process. Required prior to the pachytene stage to facilitate the production of multiple types of piRNAs, including those associated with repeats involved in the regulation of retrotransposons. May act by mediating protein-protein interactions during germ cell maturation (By similarity).</text>
</comment>
<comment type="subunit">
    <text evidence="1">Interacts with DDX4, PIWIL1, RANBP9 and TDRD1.</text>
</comment>
<comment type="subcellular location">
    <subcellularLocation>
        <location evidence="1">Cytoplasm</location>
    </subcellularLocation>
    <text evidence="1">Component of the meiotic nuage, also named P granule, a germ-cell-specific organelle required to repress transposon activity during meiosis. Specifically localizes to pi-bodies, a subset of the nuage which contains primary piRNAs (By similarity).</text>
</comment>
<gene>
    <name type="primary">ASZ1</name>
    <name type="synonym">GASZ</name>
</gene>